<keyword id="KW-0963">Cytoplasm</keyword>
<keyword id="KW-0378">Hydrolase</keyword>
<keyword id="KW-1185">Reference proteome</keyword>
<keyword id="KW-0694">RNA-binding</keyword>
<keyword id="KW-0820">tRNA-binding</keyword>
<evidence type="ECO:0000255" key="1">
    <source>
        <dbReference type="HAMAP-Rule" id="MF_00083"/>
    </source>
</evidence>
<name>PTH_PHEZH</name>
<sequence length="209" mass="22763">MLLIAGLGNPGPTYAKNRHNIGFMAVDEIARRWGFPAARSRFRSLAAEGAIDTPQGPVRTLILKPQTYYNESGRAVGEAMKFFKLQPSDVVVFYDEIDLAPGRFRMKTGGGAAGNNGIRSVASQIGPDFRRARLGTGHPGQKELVHGHVLSDFHKAEMKWVEPLLEACADAAPLLALGDDEKYQAEVMRLAPAEKADPRKLAQGKPRGE</sequence>
<protein>
    <recommendedName>
        <fullName evidence="1">Peptidyl-tRNA hydrolase</fullName>
        <shortName evidence="1">Pth</shortName>
        <ecNumber evidence="1">3.1.1.29</ecNumber>
    </recommendedName>
</protein>
<proteinExistence type="inferred from homology"/>
<gene>
    <name evidence="1" type="primary">pth</name>
    <name type="ordered locus">PHZ_c2864</name>
</gene>
<organism>
    <name type="scientific">Phenylobacterium zucineum (strain HLK1)</name>
    <dbReference type="NCBI Taxonomy" id="450851"/>
    <lineage>
        <taxon>Bacteria</taxon>
        <taxon>Pseudomonadati</taxon>
        <taxon>Pseudomonadota</taxon>
        <taxon>Alphaproteobacteria</taxon>
        <taxon>Caulobacterales</taxon>
        <taxon>Caulobacteraceae</taxon>
        <taxon>Phenylobacterium</taxon>
    </lineage>
</organism>
<reference key="1">
    <citation type="journal article" date="2008" name="BMC Genomics">
        <title>Complete genome of Phenylobacterium zucineum - a novel facultative intracellular bacterium isolated from human erythroleukemia cell line K562.</title>
        <authorList>
            <person name="Luo Y."/>
            <person name="Xu X."/>
            <person name="Ding Z."/>
            <person name="Liu Z."/>
            <person name="Zhang B."/>
            <person name="Yan Z."/>
            <person name="Sun J."/>
            <person name="Hu S."/>
            <person name="Hu X."/>
        </authorList>
    </citation>
    <scope>NUCLEOTIDE SEQUENCE [LARGE SCALE GENOMIC DNA]</scope>
    <source>
        <strain>HLK1</strain>
    </source>
</reference>
<feature type="chain" id="PRO_1000092966" description="Peptidyl-tRNA hydrolase">
    <location>
        <begin position="1"/>
        <end position="209"/>
    </location>
</feature>
<feature type="active site" description="Proton acceptor" evidence="1">
    <location>
        <position position="19"/>
    </location>
</feature>
<feature type="binding site" evidence="1">
    <location>
        <position position="14"/>
    </location>
    <ligand>
        <name>tRNA</name>
        <dbReference type="ChEBI" id="CHEBI:17843"/>
    </ligand>
</feature>
<feature type="binding site" evidence="1">
    <location>
        <position position="68"/>
    </location>
    <ligand>
        <name>tRNA</name>
        <dbReference type="ChEBI" id="CHEBI:17843"/>
    </ligand>
</feature>
<feature type="binding site" evidence="1">
    <location>
        <position position="70"/>
    </location>
    <ligand>
        <name>tRNA</name>
        <dbReference type="ChEBI" id="CHEBI:17843"/>
    </ligand>
</feature>
<feature type="binding site" evidence="1">
    <location>
        <position position="116"/>
    </location>
    <ligand>
        <name>tRNA</name>
        <dbReference type="ChEBI" id="CHEBI:17843"/>
    </ligand>
</feature>
<feature type="site" description="Discriminates between blocked and unblocked aminoacyl-tRNA" evidence="1">
    <location>
        <position position="9"/>
    </location>
</feature>
<feature type="site" description="Stabilizes the basic form of H active site to accept a proton" evidence="1">
    <location>
        <position position="95"/>
    </location>
</feature>
<comment type="function">
    <text evidence="1">Hydrolyzes ribosome-free peptidyl-tRNAs (with 1 or more amino acids incorporated), which drop off the ribosome during protein synthesis, or as a result of ribosome stalling.</text>
</comment>
<comment type="function">
    <text evidence="1">Catalyzes the release of premature peptidyl moieties from peptidyl-tRNA molecules trapped in stalled 50S ribosomal subunits, and thus maintains levels of free tRNAs and 50S ribosomes.</text>
</comment>
<comment type="catalytic activity">
    <reaction evidence="1">
        <text>an N-acyl-L-alpha-aminoacyl-tRNA + H2O = an N-acyl-L-amino acid + a tRNA + H(+)</text>
        <dbReference type="Rhea" id="RHEA:54448"/>
        <dbReference type="Rhea" id="RHEA-COMP:10123"/>
        <dbReference type="Rhea" id="RHEA-COMP:13883"/>
        <dbReference type="ChEBI" id="CHEBI:15377"/>
        <dbReference type="ChEBI" id="CHEBI:15378"/>
        <dbReference type="ChEBI" id="CHEBI:59874"/>
        <dbReference type="ChEBI" id="CHEBI:78442"/>
        <dbReference type="ChEBI" id="CHEBI:138191"/>
        <dbReference type="EC" id="3.1.1.29"/>
    </reaction>
</comment>
<comment type="subunit">
    <text evidence="1">Monomer.</text>
</comment>
<comment type="subcellular location">
    <subcellularLocation>
        <location evidence="1">Cytoplasm</location>
    </subcellularLocation>
</comment>
<comment type="similarity">
    <text evidence="1">Belongs to the PTH family.</text>
</comment>
<dbReference type="EC" id="3.1.1.29" evidence="1"/>
<dbReference type="EMBL" id="CP000747">
    <property type="protein sequence ID" value="ACG79273.1"/>
    <property type="molecule type" value="Genomic_DNA"/>
</dbReference>
<dbReference type="RefSeq" id="WP_012523411.1">
    <property type="nucleotide sequence ID" value="NC_011144.1"/>
</dbReference>
<dbReference type="SMR" id="B4R8Q8"/>
<dbReference type="STRING" id="450851.PHZ_c2864"/>
<dbReference type="KEGG" id="pzu:PHZ_c2864"/>
<dbReference type="eggNOG" id="COG0193">
    <property type="taxonomic scope" value="Bacteria"/>
</dbReference>
<dbReference type="HOGENOM" id="CLU_062456_1_1_5"/>
<dbReference type="OrthoDB" id="9800507at2"/>
<dbReference type="Proteomes" id="UP000001868">
    <property type="component" value="Chromosome"/>
</dbReference>
<dbReference type="GO" id="GO:0005737">
    <property type="term" value="C:cytoplasm"/>
    <property type="evidence" value="ECO:0007669"/>
    <property type="project" value="UniProtKB-SubCell"/>
</dbReference>
<dbReference type="GO" id="GO:0004045">
    <property type="term" value="F:peptidyl-tRNA hydrolase activity"/>
    <property type="evidence" value="ECO:0007669"/>
    <property type="project" value="UniProtKB-UniRule"/>
</dbReference>
<dbReference type="GO" id="GO:0000049">
    <property type="term" value="F:tRNA binding"/>
    <property type="evidence" value="ECO:0007669"/>
    <property type="project" value="UniProtKB-UniRule"/>
</dbReference>
<dbReference type="GO" id="GO:0006515">
    <property type="term" value="P:protein quality control for misfolded or incompletely synthesized proteins"/>
    <property type="evidence" value="ECO:0007669"/>
    <property type="project" value="UniProtKB-UniRule"/>
</dbReference>
<dbReference type="GO" id="GO:0072344">
    <property type="term" value="P:rescue of stalled ribosome"/>
    <property type="evidence" value="ECO:0007669"/>
    <property type="project" value="UniProtKB-UniRule"/>
</dbReference>
<dbReference type="CDD" id="cd00462">
    <property type="entry name" value="PTH"/>
    <property type="match status" value="1"/>
</dbReference>
<dbReference type="Gene3D" id="3.40.50.1470">
    <property type="entry name" value="Peptidyl-tRNA hydrolase"/>
    <property type="match status" value="1"/>
</dbReference>
<dbReference type="HAMAP" id="MF_00083">
    <property type="entry name" value="Pept_tRNA_hydro_bact"/>
    <property type="match status" value="1"/>
</dbReference>
<dbReference type="InterPro" id="IPR001328">
    <property type="entry name" value="Pept_tRNA_hydro"/>
</dbReference>
<dbReference type="InterPro" id="IPR018171">
    <property type="entry name" value="Pept_tRNA_hydro_CS"/>
</dbReference>
<dbReference type="InterPro" id="IPR036416">
    <property type="entry name" value="Pept_tRNA_hydro_sf"/>
</dbReference>
<dbReference type="NCBIfam" id="TIGR00447">
    <property type="entry name" value="pth"/>
    <property type="match status" value="1"/>
</dbReference>
<dbReference type="PANTHER" id="PTHR17224">
    <property type="entry name" value="PEPTIDYL-TRNA HYDROLASE"/>
    <property type="match status" value="1"/>
</dbReference>
<dbReference type="PANTHER" id="PTHR17224:SF1">
    <property type="entry name" value="PEPTIDYL-TRNA HYDROLASE"/>
    <property type="match status" value="1"/>
</dbReference>
<dbReference type="Pfam" id="PF01195">
    <property type="entry name" value="Pept_tRNA_hydro"/>
    <property type="match status" value="1"/>
</dbReference>
<dbReference type="SUPFAM" id="SSF53178">
    <property type="entry name" value="Peptidyl-tRNA hydrolase-like"/>
    <property type="match status" value="1"/>
</dbReference>
<dbReference type="PROSITE" id="PS01195">
    <property type="entry name" value="PEPT_TRNA_HYDROL_1"/>
    <property type="match status" value="1"/>
</dbReference>
<accession>B4R8Q8</accession>